<proteinExistence type="evidence at protein level"/>
<evidence type="ECO:0000250" key="1">
    <source>
        <dbReference type="UniProtKB" id="P0A9J6"/>
    </source>
</evidence>
<evidence type="ECO:0000250" key="2">
    <source>
        <dbReference type="UniProtKB" id="P0AEW9"/>
    </source>
</evidence>
<evidence type="ECO:0000305" key="3"/>
<organism>
    <name type="scientific">Mycoplasma pneumoniae (strain ATCC 29342 / M129 / Subtype 1)</name>
    <name type="common">Mycoplasmoides pneumoniae</name>
    <dbReference type="NCBI Taxonomy" id="272634"/>
    <lineage>
        <taxon>Bacteria</taxon>
        <taxon>Bacillati</taxon>
        <taxon>Mycoplasmatota</taxon>
        <taxon>Mycoplasmoidales</taxon>
        <taxon>Mycoplasmoidaceae</taxon>
        <taxon>Mycoplasmoides</taxon>
    </lineage>
</organism>
<gene>
    <name type="primary">fruK</name>
    <name type="ordered locus">MPN_079</name>
    <name type="ORF">MP076</name>
</gene>
<feature type="chain" id="PRO_0000080069" description="Putative 1-phosphofructokinase">
    <location>
        <begin position="1"/>
        <end position="300"/>
    </location>
</feature>
<feature type="active site" description="Proton acceptor" evidence="1">
    <location>
        <position position="247"/>
    </location>
</feature>
<feature type="binding site" evidence="1">
    <location>
        <begin position="214"/>
        <end position="219"/>
    </location>
    <ligand>
        <name>ATP</name>
        <dbReference type="ChEBI" id="CHEBI:30616"/>
    </ligand>
</feature>
<feature type="binding site" evidence="1">
    <location>
        <begin position="246"/>
        <end position="247"/>
    </location>
    <ligand>
        <name>ATP</name>
        <dbReference type="ChEBI" id="CHEBI:30616"/>
    </ligand>
</feature>
<keyword id="KW-0067">ATP-binding</keyword>
<keyword id="KW-0418">Kinase</keyword>
<keyword id="KW-0547">Nucleotide-binding</keyword>
<keyword id="KW-1185">Reference proteome</keyword>
<keyword id="KW-0808">Transferase</keyword>
<protein>
    <recommendedName>
        <fullName evidence="2">Putative 1-phosphofructokinase</fullName>
        <ecNumber evidence="2">2.7.1.56</ecNumber>
    </recommendedName>
    <alternativeName>
        <fullName evidence="2">Fructose 1-phosphate kinase</fullName>
        <shortName evidence="2">Fru1PK</shortName>
    </alternativeName>
</protein>
<sequence length="300" mass="33588">MLNHNSKVWIVNYACAIDYYLDKHKQQRGVLTPGGKGINMAIVMALFGIKPTVLTFLGQPTKDLFLQLLKPYQLDLVSFPATTQTRINVKLLDGAQTTEINDVTPLIEEQAVHEMIAYLKANVKPNDLLVLNGRFLQRDLVKLLDVAFSLTKYVVLDVDEPQLLQLLNQRQPWLMKPNRDEFVAMVNANNSNVDQQELVQLIKQFQTTQNLLMSDGAQGAYFFDQQQLLFMEAIPPQQLVSTTGAGDTLLGVFLANLLLDKDPVGSLKVAVNYASATISKLAVVNSNDQIVLKATNYYYL</sequence>
<name>K1PF_MYCPN</name>
<accession>P75038</accession>
<comment type="function">
    <text evidence="2">Catalyzes the ATP-dependent phosphorylation of fructose-l-phosphate to fructose-l,6-bisphosphate.</text>
</comment>
<comment type="catalytic activity">
    <reaction evidence="2">
        <text>beta-D-fructose 1-phosphate + ATP = beta-D-fructose 1,6-bisphosphate + ADP + H(+)</text>
        <dbReference type="Rhea" id="RHEA:14213"/>
        <dbReference type="ChEBI" id="CHEBI:15378"/>
        <dbReference type="ChEBI" id="CHEBI:30616"/>
        <dbReference type="ChEBI" id="CHEBI:32966"/>
        <dbReference type="ChEBI" id="CHEBI:138881"/>
        <dbReference type="ChEBI" id="CHEBI:456216"/>
        <dbReference type="EC" id="2.7.1.56"/>
    </reaction>
</comment>
<comment type="similarity">
    <text evidence="3">Belongs to the carbohydrate kinase PfkB family.</text>
</comment>
<reference key="1">
    <citation type="journal article" date="1996" name="Nucleic Acids Res.">
        <title>Complete sequence analysis of the genome of the bacterium Mycoplasma pneumoniae.</title>
        <authorList>
            <person name="Himmelreich R."/>
            <person name="Hilbert H."/>
            <person name="Plagens H."/>
            <person name="Pirkl E."/>
            <person name="Li B.-C."/>
            <person name="Herrmann R."/>
        </authorList>
    </citation>
    <scope>NUCLEOTIDE SEQUENCE [LARGE SCALE GENOMIC DNA]</scope>
    <source>
        <strain>ATCC 29342 / M129 / Subtype 1</strain>
    </source>
</reference>
<reference key="2">
    <citation type="journal article" date="2000" name="Electrophoresis">
        <title>Towards a two-dimensional proteome map of Mycoplasma pneumoniae.</title>
        <authorList>
            <person name="Regula J.T."/>
            <person name="Ueberle B."/>
            <person name="Boguth G."/>
            <person name="Goerg A."/>
            <person name="Schnoelzer M."/>
            <person name="Herrmann R."/>
            <person name="Frank R."/>
        </authorList>
    </citation>
    <scope>IDENTIFICATION BY MASS SPECTROMETRY</scope>
    <source>
        <strain>ATCC 29342 / M129 / Subtype 1</strain>
    </source>
</reference>
<dbReference type="EC" id="2.7.1.56" evidence="2"/>
<dbReference type="EMBL" id="U00089">
    <property type="protein sequence ID" value="AAB95724.1"/>
    <property type="molecule type" value="Genomic_DNA"/>
</dbReference>
<dbReference type="PIR" id="S73402">
    <property type="entry name" value="S73402"/>
</dbReference>
<dbReference type="RefSeq" id="NP_109767.1">
    <property type="nucleotide sequence ID" value="NC_000912.1"/>
</dbReference>
<dbReference type="RefSeq" id="WP_010874436.1">
    <property type="nucleotide sequence ID" value="NZ_OU342337.1"/>
</dbReference>
<dbReference type="SMR" id="P75038"/>
<dbReference type="IntAct" id="P75038">
    <property type="interactions" value="1"/>
</dbReference>
<dbReference type="STRING" id="272634.MPN_079"/>
<dbReference type="EnsemblBacteria" id="AAB95724">
    <property type="protein sequence ID" value="AAB95724"/>
    <property type="gene ID" value="MPN_079"/>
</dbReference>
<dbReference type="KEGG" id="mpn:MPN_079"/>
<dbReference type="PATRIC" id="fig|272634.6.peg.80"/>
<dbReference type="HOGENOM" id="CLU_050013_1_0_14"/>
<dbReference type="OrthoDB" id="9801219at2"/>
<dbReference type="BioCyc" id="MPNE272634:G1GJ3-123-MONOMER"/>
<dbReference type="Proteomes" id="UP000000808">
    <property type="component" value="Chromosome"/>
</dbReference>
<dbReference type="GO" id="GO:0005829">
    <property type="term" value="C:cytosol"/>
    <property type="evidence" value="ECO:0007669"/>
    <property type="project" value="TreeGrafter"/>
</dbReference>
<dbReference type="GO" id="GO:0008662">
    <property type="term" value="F:1-phosphofructokinase activity"/>
    <property type="evidence" value="ECO:0007669"/>
    <property type="project" value="UniProtKB-EC"/>
</dbReference>
<dbReference type="GO" id="GO:0005524">
    <property type="term" value="F:ATP binding"/>
    <property type="evidence" value="ECO:0007669"/>
    <property type="project" value="UniProtKB-KW"/>
</dbReference>
<dbReference type="CDD" id="cd01164">
    <property type="entry name" value="FruK_PfkB_like"/>
    <property type="match status" value="1"/>
</dbReference>
<dbReference type="Gene3D" id="3.40.1190.20">
    <property type="match status" value="1"/>
</dbReference>
<dbReference type="InterPro" id="IPR002173">
    <property type="entry name" value="Carboh/pur_kinase_PfkB_CS"/>
</dbReference>
<dbReference type="InterPro" id="IPR011611">
    <property type="entry name" value="PfkB_dom"/>
</dbReference>
<dbReference type="InterPro" id="IPR029056">
    <property type="entry name" value="Ribokinase-like"/>
</dbReference>
<dbReference type="InterPro" id="IPR017583">
    <property type="entry name" value="Tagatose/fructose_Pkinase"/>
</dbReference>
<dbReference type="PANTHER" id="PTHR46566:SF1">
    <property type="entry name" value="1-PHOSPHOFRUCTOKINASE"/>
    <property type="match status" value="1"/>
</dbReference>
<dbReference type="PANTHER" id="PTHR46566">
    <property type="entry name" value="1-PHOSPHOFRUCTOKINASE-RELATED"/>
    <property type="match status" value="1"/>
</dbReference>
<dbReference type="Pfam" id="PF00294">
    <property type="entry name" value="PfkB"/>
    <property type="match status" value="1"/>
</dbReference>
<dbReference type="PIRSF" id="PIRSF000535">
    <property type="entry name" value="1PFK/6PFK/LacC"/>
    <property type="match status" value="1"/>
</dbReference>
<dbReference type="SUPFAM" id="SSF53613">
    <property type="entry name" value="Ribokinase-like"/>
    <property type="match status" value="1"/>
</dbReference>
<dbReference type="PROSITE" id="PS00583">
    <property type="entry name" value="PFKB_KINASES_1"/>
    <property type="match status" value="1"/>
</dbReference>